<proteinExistence type="inferred from homology"/>
<dbReference type="EC" id="2.1.3.15" evidence="1"/>
<dbReference type="EMBL" id="CP000450">
    <property type="protein sequence ID" value="ABI60611.1"/>
    <property type="molecule type" value="Genomic_DNA"/>
</dbReference>
<dbReference type="RefSeq" id="WP_011635379.1">
    <property type="nucleotide sequence ID" value="NC_008344.1"/>
</dbReference>
<dbReference type="SMR" id="Q0ADH1"/>
<dbReference type="STRING" id="335283.Neut_2398"/>
<dbReference type="KEGG" id="net:Neut_2398"/>
<dbReference type="eggNOG" id="COG0825">
    <property type="taxonomic scope" value="Bacteria"/>
</dbReference>
<dbReference type="HOGENOM" id="CLU_015486_0_2_4"/>
<dbReference type="OrthoDB" id="9808023at2"/>
<dbReference type="UniPathway" id="UPA00655">
    <property type="reaction ID" value="UER00711"/>
</dbReference>
<dbReference type="Proteomes" id="UP000001966">
    <property type="component" value="Chromosome"/>
</dbReference>
<dbReference type="GO" id="GO:0009317">
    <property type="term" value="C:acetyl-CoA carboxylase complex"/>
    <property type="evidence" value="ECO:0007669"/>
    <property type="project" value="InterPro"/>
</dbReference>
<dbReference type="GO" id="GO:0003989">
    <property type="term" value="F:acetyl-CoA carboxylase activity"/>
    <property type="evidence" value="ECO:0007669"/>
    <property type="project" value="InterPro"/>
</dbReference>
<dbReference type="GO" id="GO:0005524">
    <property type="term" value="F:ATP binding"/>
    <property type="evidence" value="ECO:0007669"/>
    <property type="project" value="UniProtKB-KW"/>
</dbReference>
<dbReference type="GO" id="GO:0016743">
    <property type="term" value="F:carboxyl- or carbamoyltransferase activity"/>
    <property type="evidence" value="ECO:0007669"/>
    <property type="project" value="UniProtKB-UniRule"/>
</dbReference>
<dbReference type="GO" id="GO:0006633">
    <property type="term" value="P:fatty acid biosynthetic process"/>
    <property type="evidence" value="ECO:0007669"/>
    <property type="project" value="UniProtKB-KW"/>
</dbReference>
<dbReference type="GO" id="GO:2001295">
    <property type="term" value="P:malonyl-CoA biosynthetic process"/>
    <property type="evidence" value="ECO:0007669"/>
    <property type="project" value="UniProtKB-UniRule"/>
</dbReference>
<dbReference type="Gene3D" id="3.90.226.10">
    <property type="entry name" value="2-enoyl-CoA Hydratase, Chain A, domain 1"/>
    <property type="match status" value="1"/>
</dbReference>
<dbReference type="HAMAP" id="MF_00823">
    <property type="entry name" value="AcetylCoA_CT_alpha"/>
    <property type="match status" value="1"/>
</dbReference>
<dbReference type="InterPro" id="IPR001095">
    <property type="entry name" value="Acetyl_CoA_COase_a_su"/>
</dbReference>
<dbReference type="InterPro" id="IPR029045">
    <property type="entry name" value="ClpP/crotonase-like_dom_sf"/>
</dbReference>
<dbReference type="InterPro" id="IPR011763">
    <property type="entry name" value="COA_CT_C"/>
</dbReference>
<dbReference type="NCBIfam" id="TIGR00513">
    <property type="entry name" value="accA"/>
    <property type="match status" value="1"/>
</dbReference>
<dbReference type="NCBIfam" id="NF041504">
    <property type="entry name" value="AccA_sub"/>
    <property type="match status" value="1"/>
</dbReference>
<dbReference type="NCBIfam" id="NF004344">
    <property type="entry name" value="PRK05724.1"/>
    <property type="match status" value="1"/>
</dbReference>
<dbReference type="PANTHER" id="PTHR42853">
    <property type="entry name" value="ACETYL-COENZYME A CARBOXYLASE CARBOXYL TRANSFERASE SUBUNIT ALPHA"/>
    <property type="match status" value="1"/>
</dbReference>
<dbReference type="PANTHER" id="PTHR42853:SF3">
    <property type="entry name" value="ACETYL-COENZYME A CARBOXYLASE CARBOXYL TRANSFERASE SUBUNIT ALPHA, CHLOROPLASTIC"/>
    <property type="match status" value="1"/>
</dbReference>
<dbReference type="Pfam" id="PF03255">
    <property type="entry name" value="ACCA"/>
    <property type="match status" value="1"/>
</dbReference>
<dbReference type="PRINTS" id="PR01069">
    <property type="entry name" value="ACCCTRFRASEA"/>
</dbReference>
<dbReference type="SUPFAM" id="SSF52096">
    <property type="entry name" value="ClpP/crotonase"/>
    <property type="match status" value="1"/>
</dbReference>
<dbReference type="PROSITE" id="PS50989">
    <property type="entry name" value="COA_CT_CTER"/>
    <property type="match status" value="1"/>
</dbReference>
<accession>Q0ADH1</accession>
<comment type="function">
    <text evidence="1">Component of the acetyl coenzyme A carboxylase (ACC) complex. First, biotin carboxylase catalyzes the carboxylation of biotin on its carrier protein (BCCP) and then the CO(2) group is transferred by the carboxyltransferase to acetyl-CoA to form malonyl-CoA.</text>
</comment>
<comment type="catalytic activity">
    <reaction evidence="1">
        <text>N(6)-carboxybiotinyl-L-lysyl-[protein] + acetyl-CoA = N(6)-biotinyl-L-lysyl-[protein] + malonyl-CoA</text>
        <dbReference type="Rhea" id="RHEA:54728"/>
        <dbReference type="Rhea" id="RHEA-COMP:10505"/>
        <dbReference type="Rhea" id="RHEA-COMP:10506"/>
        <dbReference type="ChEBI" id="CHEBI:57288"/>
        <dbReference type="ChEBI" id="CHEBI:57384"/>
        <dbReference type="ChEBI" id="CHEBI:83144"/>
        <dbReference type="ChEBI" id="CHEBI:83145"/>
        <dbReference type="EC" id="2.1.3.15"/>
    </reaction>
</comment>
<comment type="pathway">
    <text evidence="1">Lipid metabolism; malonyl-CoA biosynthesis; malonyl-CoA from acetyl-CoA: step 1/1.</text>
</comment>
<comment type="subunit">
    <text evidence="1">Acetyl-CoA carboxylase is a heterohexamer composed of biotin carboxyl carrier protein (AccB), biotin carboxylase (AccC) and two subunits each of ACCase subunit alpha (AccA) and ACCase subunit beta (AccD).</text>
</comment>
<comment type="subcellular location">
    <subcellularLocation>
        <location evidence="1">Cytoplasm</location>
    </subcellularLocation>
</comment>
<comment type="similarity">
    <text evidence="1">Belongs to the AccA family.</text>
</comment>
<keyword id="KW-0067">ATP-binding</keyword>
<keyword id="KW-0963">Cytoplasm</keyword>
<keyword id="KW-0275">Fatty acid biosynthesis</keyword>
<keyword id="KW-0276">Fatty acid metabolism</keyword>
<keyword id="KW-0444">Lipid biosynthesis</keyword>
<keyword id="KW-0443">Lipid metabolism</keyword>
<keyword id="KW-0547">Nucleotide-binding</keyword>
<keyword id="KW-0808">Transferase</keyword>
<feature type="chain" id="PRO_1000062640" description="Acetyl-coenzyme A carboxylase carboxyl transferase subunit alpha">
    <location>
        <begin position="1"/>
        <end position="322"/>
    </location>
</feature>
<feature type="domain" description="CoA carboxyltransferase C-terminal" evidence="2">
    <location>
        <begin position="30"/>
        <end position="293"/>
    </location>
</feature>
<evidence type="ECO:0000255" key="1">
    <source>
        <dbReference type="HAMAP-Rule" id="MF_00823"/>
    </source>
</evidence>
<evidence type="ECO:0000255" key="2">
    <source>
        <dbReference type="PROSITE-ProRule" id="PRU01137"/>
    </source>
</evidence>
<gene>
    <name evidence="1" type="primary">accA</name>
    <name type="ordered locus">Neut_2398</name>
</gene>
<organism>
    <name type="scientific">Nitrosomonas eutropha (strain DSM 101675 / C91 / Nm57)</name>
    <dbReference type="NCBI Taxonomy" id="335283"/>
    <lineage>
        <taxon>Bacteria</taxon>
        <taxon>Pseudomonadati</taxon>
        <taxon>Pseudomonadota</taxon>
        <taxon>Betaproteobacteria</taxon>
        <taxon>Nitrosomonadales</taxon>
        <taxon>Nitrosomonadaceae</taxon>
        <taxon>Nitrosomonas</taxon>
    </lineage>
</organism>
<sequence>MKNVFLDFEKGIEEFEAKIEQLRFAQDNSALDISAEITRLQAKSQGLTKSVYAKLTPWQISQVARHPLRPSTLDYIKHLFTDFEELHGDRNFADDRAIVGGLAHFNGQTVMLIGHQKGHDTKEKIYRNFGMPKPEGYRKALRLMRLAEKFSIPLITFVDTPGAYPGIDAEERGQSEAIGKNLYVMAGLRIPIICIIIGEGGSGGALAIAVGDTSLMLQYSVYSVISPEGCASILWKSADKASDAAEILGITADRLKEMALIDTIIPEPVGGAHRDYPAVMQSVRQALQESLRKLQDIPLETLLQKRLDRLLGYGRFKINKPD</sequence>
<reference key="1">
    <citation type="journal article" date="2007" name="Environ. Microbiol.">
        <title>Whole-genome analysis of the ammonia-oxidizing bacterium, Nitrosomonas eutropha C91: implications for niche adaptation.</title>
        <authorList>
            <person name="Stein L.Y."/>
            <person name="Arp D.J."/>
            <person name="Berube P.M."/>
            <person name="Chain P.S."/>
            <person name="Hauser L."/>
            <person name="Jetten M.S."/>
            <person name="Klotz M.G."/>
            <person name="Larimer F.W."/>
            <person name="Norton J.M."/>
            <person name="Op den Camp H.J.M."/>
            <person name="Shin M."/>
            <person name="Wei X."/>
        </authorList>
    </citation>
    <scope>NUCLEOTIDE SEQUENCE [LARGE SCALE GENOMIC DNA]</scope>
    <source>
        <strain>DSM 101675 / C91 / Nm57</strain>
    </source>
</reference>
<name>ACCA_NITEC</name>
<protein>
    <recommendedName>
        <fullName evidence="1">Acetyl-coenzyme A carboxylase carboxyl transferase subunit alpha</fullName>
        <shortName evidence="1">ACCase subunit alpha</shortName>
        <shortName evidence="1">Acetyl-CoA carboxylase carboxyltransferase subunit alpha</shortName>
        <ecNumber evidence="1">2.1.3.15</ecNumber>
    </recommendedName>
</protein>